<comment type="function">
    <text evidence="1">Catalyzes the transfer of a dimethylallyl group onto the adenine at position 37 in tRNAs that read codons beginning with uridine, leading to the formation of N6-(dimethylallyl)adenosine (i(6)A).</text>
</comment>
<comment type="catalytic activity">
    <reaction evidence="1">
        <text>adenosine(37) in tRNA + dimethylallyl diphosphate = N(6)-dimethylallyladenosine(37) in tRNA + diphosphate</text>
        <dbReference type="Rhea" id="RHEA:26482"/>
        <dbReference type="Rhea" id="RHEA-COMP:10162"/>
        <dbReference type="Rhea" id="RHEA-COMP:10375"/>
        <dbReference type="ChEBI" id="CHEBI:33019"/>
        <dbReference type="ChEBI" id="CHEBI:57623"/>
        <dbReference type="ChEBI" id="CHEBI:74411"/>
        <dbReference type="ChEBI" id="CHEBI:74415"/>
        <dbReference type="EC" id="2.5.1.75"/>
    </reaction>
</comment>
<comment type="cofactor">
    <cofactor evidence="1">
        <name>Mg(2+)</name>
        <dbReference type="ChEBI" id="CHEBI:18420"/>
    </cofactor>
</comment>
<comment type="subunit">
    <text evidence="1">Monomer.</text>
</comment>
<comment type="similarity">
    <text evidence="1">Belongs to the IPP transferase family.</text>
</comment>
<reference key="1">
    <citation type="journal article" date="2004" name="Proc. Natl. Acad. Sci. U.S.A.">
        <title>Genome sequence of the enterobacterial phytopathogen Erwinia carotovora subsp. atroseptica and characterization of virulence factors.</title>
        <authorList>
            <person name="Bell K.S."/>
            <person name="Sebaihia M."/>
            <person name="Pritchard L."/>
            <person name="Holden M.T.G."/>
            <person name="Hyman L.J."/>
            <person name="Holeva M.C."/>
            <person name="Thomson N.R."/>
            <person name="Bentley S.D."/>
            <person name="Churcher L.J.C."/>
            <person name="Mungall K."/>
            <person name="Atkin R."/>
            <person name="Bason N."/>
            <person name="Brooks K."/>
            <person name="Chillingworth T."/>
            <person name="Clark K."/>
            <person name="Doggett J."/>
            <person name="Fraser A."/>
            <person name="Hance Z."/>
            <person name="Hauser H."/>
            <person name="Jagels K."/>
            <person name="Moule S."/>
            <person name="Norbertczak H."/>
            <person name="Ormond D."/>
            <person name="Price C."/>
            <person name="Quail M.A."/>
            <person name="Sanders M."/>
            <person name="Walker D."/>
            <person name="Whitehead S."/>
            <person name="Salmond G.P.C."/>
            <person name="Birch P.R.J."/>
            <person name="Parkhill J."/>
            <person name="Toth I.K."/>
        </authorList>
    </citation>
    <scope>NUCLEOTIDE SEQUENCE [LARGE SCALE GENOMIC DNA]</scope>
    <source>
        <strain>SCRI 1043 / ATCC BAA-672</strain>
    </source>
</reference>
<name>MIAA_PECAS</name>
<gene>
    <name evidence="1" type="primary">miaA</name>
    <name type="ordered locus">ECA3935</name>
</gene>
<evidence type="ECO:0000255" key="1">
    <source>
        <dbReference type="HAMAP-Rule" id="MF_00185"/>
    </source>
</evidence>
<proteinExistence type="inferred from homology"/>
<dbReference type="EC" id="2.5.1.75" evidence="1"/>
<dbReference type="EMBL" id="BX950851">
    <property type="protein sequence ID" value="CAG76832.1"/>
    <property type="molecule type" value="Genomic_DNA"/>
</dbReference>
<dbReference type="RefSeq" id="WP_011095429.1">
    <property type="nucleotide sequence ID" value="NC_004547.2"/>
</dbReference>
<dbReference type="SMR" id="Q6D066"/>
<dbReference type="STRING" id="218491.ECA3935"/>
<dbReference type="GeneID" id="57210549"/>
<dbReference type="KEGG" id="eca:ECA3935"/>
<dbReference type="PATRIC" id="fig|218491.5.peg.4000"/>
<dbReference type="eggNOG" id="COG0324">
    <property type="taxonomic scope" value="Bacteria"/>
</dbReference>
<dbReference type="HOGENOM" id="CLU_032616_0_0_6"/>
<dbReference type="OrthoDB" id="9776390at2"/>
<dbReference type="Proteomes" id="UP000007966">
    <property type="component" value="Chromosome"/>
</dbReference>
<dbReference type="GO" id="GO:0005524">
    <property type="term" value="F:ATP binding"/>
    <property type="evidence" value="ECO:0007669"/>
    <property type="project" value="UniProtKB-UniRule"/>
</dbReference>
<dbReference type="GO" id="GO:0052381">
    <property type="term" value="F:tRNA dimethylallyltransferase activity"/>
    <property type="evidence" value="ECO:0007669"/>
    <property type="project" value="UniProtKB-UniRule"/>
</dbReference>
<dbReference type="GO" id="GO:0006400">
    <property type="term" value="P:tRNA modification"/>
    <property type="evidence" value="ECO:0007669"/>
    <property type="project" value="TreeGrafter"/>
</dbReference>
<dbReference type="FunFam" id="1.10.20.140:FF:000001">
    <property type="entry name" value="tRNA dimethylallyltransferase"/>
    <property type="match status" value="1"/>
</dbReference>
<dbReference type="Gene3D" id="1.10.20.140">
    <property type="match status" value="1"/>
</dbReference>
<dbReference type="Gene3D" id="3.40.50.300">
    <property type="entry name" value="P-loop containing nucleotide triphosphate hydrolases"/>
    <property type="match status" value="1"/>
</dbReference>
<dbReference type="HAMAP" id="MF_00185">
    <property type="entry name" value="IPP_trans"/>
    <property type="match status" value="1"/>
</dbReference>
<dbReference type="InterPro" id="IPR039657">
    <property type="entry name" value="Dimethylallyltransferase"/>
</dbReference>
<dbReference type="InterPro" id="IPR018022">
    <property type="entry name" value="IPT"/>
</dbReference>
<dbReference type="InterPro" id="IPR027417">
    <property type="entry name" value="P-loop_NTPase"/>
</dbReference>
<dbReference type="NCBIfam" id="TIGR00174">
    <property type="entry name" value="miaA"/>
    <property type="match status" value="1"/>
</dbReference>
<dbReference type="PANTHER" id="PTHR11088">
    <property type="entry name" value="TRNA DIMETHYLALLYLTRANSFERASE"/>
    <property type="match status" value="1"/>
</dbReference>
<dbReference type="PANTHER" id="PTHR11088:SF60">
    <property type="entry name" value="TRNA DIMETHYLALLYLTRANSFERASE"/>
    <property type="match status" value="1"/>
</dbReference>
<dbReference type="Pfam" id="PF01715">
    <property type="entry name" value="IPPT"/>
    <property type="match status" value="1"/>
</dbReference>
<dbReference type="SUPFAM" id="SSF52540">
    <property type="entry name" value="P-loop containing nucleoside triphosphate hydrolases"/>
    <property type="match status" value="1"/>
</dbReference>
<protein>
    <recommendedName>
        <fullName evidence="1">tRNA dimethylallyltransferase</fullName>
        <ecNumber evidence="1">2.5.1.75</ecNumber>
    </recommendedName>
    <alternativeName>
        <fullName evidence="1">Dimethylallyl diphosphate:tRNA dimethylallyltransferase</fullName>
        <shortName evidence="1">DMAPP:tRNA dimethylallyltransferase</shortName>
        <shortName evidence="1">DMATase</shortName>
    </alternativeName>
    <alternativeName>
        <fullName evidence="1">Isopentenyl-diphosphate:tRNA isopentenyltransferase</fullName>
        <shortName evidence="1">IPP transferase</shortName>
        <shortName evidence="1">IPPT</shortName>
        <shortName evidence="1">IPTase</shortName>
    </alternativeName>
</protein>
<keyword id="KW-0067">ATP-binding</keyword>
<keyword id="KW-0460">Magnesium</keyword>
<keyword id="KW-0547">Nucleotide-binding</keyword>
<keyword id="KW-1185">Reference proteome</keyword>
<keyword id="KW-0808">Transferase</keyword>
<keyword id="KW-0819">tRNA processing</keyword>
<accession>Q6D066</accession>
<organism>
    <name type="scientific">Pectobacterium atrosepticum (strain SCRI 1043 / ATCC BAA-672)</name>
    <name type="common">Erwinia carotovora subsp. atroseptica</name>
    <dbReference type="NCBI Taxonomy" id="218491"/>
    <lineage>
        <taxon>Bacteria</taxon>
        <taxon>Pseudomonadati</taxon>
        <taxon>Pseudomonadota</taxon>
        <taxon>Gammaproteobacteria</taxon>
        <taxon>Enterobacterales</taxon>
        <taxon>Pectobacteriaceae</taxon>
        <taxon>Pectobacterium</taxon>
    </lineage>
</organism>
<feature type="chain" id="PRO_0000163917" description="tRNA dimethylallyltransferase">
    <location>
        <begin position="1"/>
        <end position="313"/>
    </location>
</feature>
<feature type="region of interest" description="Interaction with substrate tRNA" evidence="1">
    <location>
        <begin position="42"/>
        <end position="45"/>
    </location>
</feature>
<feature type="region of interest" description="Interaction with substrate tRNA" evidence="1">
    <location>
        <begin position="166"/>
        <end position="170"/>
    </location>
</feature>
<feature type="region of interest" description="Interaction with substrate tRNA" evidence="1">
    <location>
        <begin position="247"/>
        <end position="252"/>
    </location>
</feature>
<feature type="binding site" evidence="1">
    <location>
        <begin position="17"/>
        <end position="24"/>
    </location>
    <ligand>
        <name>ATP</name>
        <dbReference type="ChEBI" id="CHEBI:30616"/>
    </ligand>
</feature>
<feature type="binding site" evidence="1">
    <location>
        <begin position="19"/>
        <end position="24"/>
    </location>
    <ligand>
        <name>substrate</name>
    </ligand>
</feature>
<feature type="site" description="Interaction with substrate tRNA" evidence="1">
    <location>
        <position position="108"/>
    </location>
</feature>
<feature type="site" description="Interaction with substrate tRNA" evidence="1">
    <location>
        <position position="130"/>
    </location>
</feature>
<sequence length="313" mass="35099">MSDVENASLPPAIFIMGPTASGKTALAMTLREYLPVELISVDSALIYKDMDIGTAKPSADELARAPHRLIDILDPTESYSAADFRRDALREMADITAAGRIPLLVGGTMLYFKALLEGLSPLPPADAAVRQRIEEQAKEIGWEAMHRQLSEIDPTAAIRIHPNDPQRLSRALEVFFISGNTLTELTKTSGDALPYQVHQFAIAPAMRELLHQRIEQRFHQMLAAGFETEARALFARHDLHTDMPSIRCVGYRQMWSYLSGEIDYDEMVYRGVCATRQLAKRQMTWLRGWDDVCWLDSENPTEALDKVIQVVSA</sequence>